<dbReference type="EC" id="3.6.4.13"/>
<dbReference type="EMBL" id="BC099554">
    <property type="protein sequence ID" value="AAH99554.1"/>
    <property type="molecule type" value="mRNA"/>
</dbReference>
<dbReference type="CCDS" id="CCDS22364.1"/>
<dbReference type="RefSeq" id="NP_001020093.2">
    <property type="nucleotide sequence ID" value="NM_001024922.2"/>
</dbReference>
<dbReference type="SMR" id="Q4FZF3"/>
<dbReference type="BioGRID" id="231521">
    <property type="interactions" value="1"/>
</dbReference>
<dbReference type="FunCoup" id="Q4FZF3">
    <property type="interactions" value="2683"/>
</dbReference>
<dbReference type="STRING" id="10090.ENSMUSP00000008004"/>
<dbReference type="iPTMnet" id="Q4FZF3"/>
<dbReference type="PhosphoSitePlus" id="Q4FZF3"/>
<dbReference type="PaxDb" id="10090-ENSMUSP00000008004"/>
<dbReference type="PeptideAtlas" id="Q4FZF3"/>
<dbReference type="ProteomicsDB" id="279904"/>
<dbReference type="Pumba" id="Q4FZF3"/>
<dbReference type="Antibodypedia" id="15208">
    <property type="antibodies" value="129 antibodies from 22 providers"/>
</dbReference>
<dbReference type="DNASU" id="234374"/>
<dbReference type="Ensembl" id="ENSMUST00000008004.10">
    <property type="protein sequence ID" value="ENSMUSP00000008004.10"/>
    <property type="gene ID" value="ENSMUSG00000057788.14"/>
</dbReference>
<dbReference type="GeneID" id="234374"/>
<dbReference type="KEGG" id="mmu:234374"/>
<dbReference type="UCSC" id="uc009lzu.1">
    <property type="organism name" value="mouse"/>
</dbReference>
<dbReference type="AGR" id="MGI:2136689"/>
<dbReference type="CTD" id="54555"/>
<dbReference type="MGI" id="MGI:2136689">
    <property type="gene designation" value="Ddx49"/>
</dbReference>
<dbReference type="VEuPathDB" id="HostDB:ENSMUSG00000057788"/>
<dbReference type="eggNOG" id="KOG0333">
    <property type="taxonomic scope" value="Eukaryota"/>
</dbReference>
<dbReference type="eggNOG" id="KOG0340">
    <property type="taxonomic scope" value="Eukaryota"/>
</dbReference>
<dbReference type="GeneTree" id="ENSGT00730000111231"/>
<dbReference type="HOGENOM" id="CLU_003041_1_1_1"/>
<dbReference type="InParanoid" id="Q4FZF3"/>
<dbReference type="OMA" id="IMIFTDT"/>
<dbReference type="OrthoDB" id="10261904at2759"/>
<dbReference type="PhylomeDB" id="Q4FZF3"/>
<dbReference type="TreeFam" id="TF320511"/>
<dbReference type="Reactome" id="R-MMU-6791226">
    <property type="pathway name" value="Major pathway of rRNA processing in the nucleolus and cytosol"/>
</dbReference>
<dbReference type="BioGRID-ORCS" id="234374">
    <property type="hits" value="24 hits in 80 CRISPR screens"/>
</dbReference>
<dbReference type="PRO" id="PR:Q4FZF3"/>
<dbReference type="Proteomes" id="UP000000589">
    <property type="component" value="Chromosome 8"/>
</dbReference>
<dbReference type="RNAct" id="Q4FZF3">
    <property type="molecule type" value="protein"/>
</dbReference>
<dbReference type="Bgee" id="ENSMUSG00000057788">
    <property type="expression patterns" value="Expressed in embryonic brain and 200 other cell types or tissues"/>
</dbReference>
<dbReference type="GO" id="GO:0005730">
    <property type="term" value="C:nucleolus"/>
    <property type="evidence" value="ECO:0007669"/>
    <property type="project" value="UniProtKB-SubCell"/>
</dbReference>
<dbReference type="GO" id="GO:0005654">
    <property type="term" value="C:nucleoplasm"/>
    <property type="evidence" value="ECO:0007669"/>
    <property type="project" value="Ensembl"/>
</dbReference>
<dbReference type="GO" id="GO:0005524">
    <property type="term" value="F:ATP binding"/>
    <property type="evidence" value="ECO:0007669"/>
    <property type="project" value="UniProtKB-KW"/>
</dbReference>
<dbReference type="GO" id="GO:0016887">
    <property type="term" value="F:ATP hydrolysis activity"/>
    <property type="evidence" value="ECO:0007669"/>
    <property type="project" value="RHEA"/>
</dbReference>
<dbReference type="GO" id="GO:0003723">
    <property type="term" value="F:RNA binding"/>
    <property type="evidence" value="ECO:0007669"/>
    <property type="project" value="UniProtKB-KW"/>
</dbReference>
<dbReference type="GO" id="GO:0003724">
    <property type="term" value="F:RNA helicase activity"/>
    <property type="evidence" value="ECO:0007669"/>
    <property type="project" value="UniProtKB-EC"/>
</dbReference>
<dbReference type="GO" id="GO:0030307">
    <property type="term" value="P:positive regulation of cell growth"/>
    <property type="evidence" value="ECO:0007669"/>
    <property type="project" value="Ensembl"/>
</dbReference>
<dbReference type="GO" id="GO:0044357">
    <property type="term" value="P:regulation of rRNA stability"/>
    <property type="evidence" value="ECO:0007669"/>
    <property type="project" value="Ensembl"/>
</dbReference>
<dbReference type="CDD" id="cd17955">
    <property type="entry name" value="DEADc_DDX49"/>
    <property type="match status" value="1"/>
</dbReference>
<dbReference type="CDD" id="cd18787">
    <property type="entry name" value="SF2_C_DEAD"/>
    <property type="match status" value="1"/>
</dbReference>
<dbReference type="FunFam" id="3.40.50.300:FF:000892">
    <property type="entry name" value="probable ATP-dependent RNA helicase DDX49"/>
    <property type="match status" value="1"/>
</dbReference>
<dbReference type="FunFam" id="3.40.50.300:FF:000993">
    <property type="entry name" value="probable ATP-dependent RNA helicase DDX49"/>
    <property type="match status" value="1"/>
</dbReference>
<dbReference type="Gene3D" id="3.40.50.300">
    <property type="entry name" value="P-loop containing nucleotide triphosphate hydrolases"/>
    <property type="match status" value="2"/>
</dbReference>
<dbReference type="InterPro" id="IPR011545">
    <property type="entry name" value="DEAD/DEAH_box_helicase_dom"/>
</dbReference>
<dbReference type="InterPro" id="IPR050079">
    <property type="entry name" value="DEAD_box_RNA_helicase"/>
</dbReference>
<dbReference type="InterPro" id="IPR014001">
    <property type="entry name" value="Helicase_ATP-bd"/>
</dbReference>
<dbReference type="InterPro" id="IPR001650">
    <property type="entry name" value="Helicase_C-like"/>
</dbReference>
<dbReference type="InterPro" id="IPR027417">
    <property type="entry name" value="P-loop_NTPase"/>
</dbReference>
<dbReference type="InterPro" id="IPR000629">
    <property type="entry name" value="RNA-helicase_DEAD-box_CS"/>
</dbReference>
<dbReference type="InterPro" id="IPR014014">
    <property type="entry name" value="RNA_helicase_DEAD_Q_motif"/>
</dbReference>
<dbReference type="PANTHER" id="PTHR47959">
    <property type="entry name" value="ATP-DEPENDENT RNA HELICASE RHLE-RELATED"/>
    <property type="match status" value="1"/>
</dbReference>
<dbReference type="PANTHER" id="PTHR47959:SF25">
    <property type="entry name" value="RNA HELICASE"/>
    <property type="match status" value="1"/>
</dbReference>
<dbReference type="Pfam" id="PF00270">
    <property type="entry name" value="DEAD"/>
    <property type="match status" value="1"/>
</dbReference>
<dbReference type="Pfam" id="PF00271">
    <property type="entry name" value="Helicase_C"/>
    <property type="match status" value="1"/>
</dbReference>
<dbReference type="SMART" id="SM00487">
    <property type="entry name" value="DEXDc"/>
    <property type="match status" value="1"/>
</dbReference>
<dbReference type="SMART" id="SM00490">
    <property type="entry name" value="HELICc"/>
    <property type="match status" value="1"/>
</dbReference>
<dbReference type="SUPFAM" id="SSF52540">
    <property type="entry name" value="P-loop containing nucleoside triphosphate hydrolases"/>
    <property type="match status" value="1"/>
</dbReference>
<dbReference type="PROSITE" id="PS00039">
    <property type="entry name" value="DEAD_ATP_HELICASE"/>
    <property type="match status" value="1"/>
</dbReference>
<dbReference type="PROSITE" id="PS51192">
    <property type="entry name" value="HELICASE_ATP_BIND_1"/>
    <property type="match status" value="1"/>
</dbReference>
<dbReference type="PROSITE" id="PS51194">
    <property type="entry name" value="HELICASE_CTER"/>
    <property type="match status" value="1"/>
</dbReference>
<dbReference type="PROSITE" id="PS51195">
    <property type="entry name" value="Q_MOTIF"/>
    <property type="match status" value="1"/>
</dbReference>
<comment type="function">
    <text evidence="1">ATP-dependent RNA helicase that plays a role in various aspects of RNA metabolism including the regulation of mRNA export and the levels of pre-ribosomal RNA. Regulates the stability and synthesis of pre-ribosomal RNA and thereby regulates cell proliferation. Also possesses antiviral activity by recognizing gammaherpesvirus transcripts in the context of lytic reactivation.</text>
</comment>
<comment type="catalytic activity">
    <reaction evidence="1">
        <text>ATP + H2O = ADP + phosphate + H(+)</text>
        <dbReference type="Rhea" id="RHEA:13065"/>
        <dbReference type="ChEBI" id="CHEBI:15377"/>
        <dbReference type="ChEBI" id="CHEBI:15378"/>
        <dbReference type="ChEBI" id="CHEBI:30616"/>
        <dbReference type="ChEBI" id="CHEBI:43474"/>
        <dbReference type="ChEBI" id="CHEBI:456216"/>
        <dbReference type="EC" id="3.6.4.13"/>
    </reaction>
</comment>
<comment type="subcellular location">
    <subcellularLocation>
        <location evidence="1">Nucleus</location>
        <location evidence="1">Nucleolus</location>
    </subcellularLocation>
</comment>
<comment type="similarity">
    <text evidence="5">Belongs to the DEAD box helicase family. DDX49/DBP8 subfamily.</text>
</comment>
<evidence type="ECO:0000250" key="1">
    <source>
        <dbReference type="UniProtKB" id="Q9Y6V7"/>
    </source>
</evidence>
<evidence type="ECO:0000255" key="2">
    <source>
        <dbReference type="PROSITE-ProRule" id="PRU00541"/>
    </source>
</evidence>
<evidence type="ECO:0000255" key="3">
    <source>
        <dbReference type="PROSITE-ProRule" id="PRU00542"/>
    </source>
</evidence>
<evidence type="ECO:0000256" key="4">
    <source>
        <dbReference type="SAM" id="MobiDB-lite"/>
    </source>
</evidence>
<evidence type="ECO:0000305" key="5"/>
<name>DDX49_MOUSE</name>
<reference key="1">
    <citation type="journal article" date="2004" name="Genome Res.">
        <title>The status, quality, and expansion of the NIH full-length cDNA project: the Mammalian Gene Collection (MGC).</title>
        <authorList>
            <consortium name="The MGC Project Team"/>
        </authorList>
    </citation>
    <scope>NUCLEOTIDE SEQUENCE [LARGE SCALE MRNA]</scope>
    <source>
        <tissue>Liver</tissue>
    </source>
</reference>
<organism>
    <name type="scientific">Mus musculus</name>
    <name type="common">Mouse</name>
    <dbReference type="NCBI Taxonomy" id="10090"/>
    <lineage>
        <taxon>Eukaryota</taxon>
        <taxon>Metazoa</taxon>
        <taxon>Chordata</taxon>
        <taxon>Craniata</taxon>
        <taxon>Vertebrata</taxon>
        <taxon>Euteleostomi</taxon>
        <taxon>Mammalia</taxon>
        <taxon>Eutheria</taxon>
        <taxon>Euarchontoglires</taxon>
        <taxon>Glires</taxon>
        <taxon>Rodentia</taxon>
        <taxon>Myomorpha</taxon>
        <taxon>Muroidea</taxon>
        <taxon>Muridae</taxon>
        <taxon>Murinae</taxon>
        <taxon>Mus</taxon>
        <taxon>Mus</taxon>
    </lineage>
</organism>
<keyword id="KW-0067">ATP-binding</keyword>
<keyword id="KW-0347">Helicase</keyword>
<keyword id="KW-0378">Hydrolase</keyword>
<keyword id="KW-0547">Nucleotide-binding</keyword>
<keyword id="KW-0539">Nucleus</keyword>
<keyword id="KW-1185">Reference proteome</keyword>
<keyword id="KW-0694">RNA-binding</keyword>
<proteinExistence type="evidence at transcript level"/>
<sequence length="480" mass="54094">MAGFAEIGLSSWLVEQCRQLGLKQPTPVQLGCIPAILEGRDCLGCAKTGSGKTAAFVLPILQKLSEDPYGIFCLVLTPTRELAYQIAEQFRVLGKPLGLKDCIIVGGMDMVAQALELSRKPHVVIATPGRLADHLRSSNTFNMKKIQFLVMDEADRLLEQGCTDFTTDLETILAAVPARRQTLLFSATLTDTLKELQGLATNEPFFWEAQATVRTVEQLDQRYLLVPEKVKDAYLVHLVQTFQDQLEDCSIIIFTNTCKTCQILCMMLRKFNFPTVALHSMMKQKERFAALAKFKSSIYRILIATDVASRGLDIPTVQVVINHNTPGLPKIYIHRVGRTARAGRQGQAITLVTQYDIHLLHAIEEQIKQQLAELVVEEAEVLQILTQVNVVRRECEIKLEASHFDEKKEINKRKQMILEGKDPDLEAKRKAELAKIKQQNRRFKEKVGQTLRRQKAGSTVRRSRPPRSRPQEPAQAEAQD</sequence>
<gene>
    <name type="primary">Ddx49</name>
</gene>
<accession>Q4FZF3</accession>
<protein>
    <recommendedName>
        <fullName>Probable ATP-dependent RNA helicase DDX49</fullName>
        <ecNumber>3.6.4.13</ecNumber>
    </recommendedName>
    <alternativeName>
        <fullName>DEAD box protein 49</fullName>
    </alternativeName>
</protein>
<feature type="chain" id="PRO_0000055053" description="Probable ATP-dependent RNA helicase DDX49">
    <location>
        <begin position="1"/>
        <end position="480"/>
    </location>
</feature>
<feature type="domain" description="Helicase ATP-binding" evidence="2">
    <location>
        <begin position="33"/>
        <end position="207"/>
    </location>
</feature>
<feature type="domain" description="Helicase C-terminal" evidence="3">
    <location>
        <begin position="218"/>
        <end position="382"/>
    </location>
</feature>
<feature type="region of interest" description="Disordered" evidence="4">
    <location>
        <begin position="438"/>
        <end position="480"/>
    </location>
</feature>
<feature type="short sequence motif" description="Q motif">
    <location>
        <begin position="2"/>
        <end position="30"/>
    </location>
</feature>
<feature type="short sequence motif" description="DEAD box">
    <location>
        <begin position="152"/>
        <end position="155"/>
    </location>
</feature>
<feature type="binding site" evidence="2">
    <location>
        <begin position="46"/>
        <end position="53"/>
    </location>
    <ligand>
        <name>ATP</name>
        <dbReference type="ChEBI" id="CHEBI:30616"/>
    </ligand>
</feature>